<proteinExistence type="evidence at protein level"/>
<protein>
    <recommendedName>
        <fullName>Nucleosome assembly protein 1;3</fullName>
        <shortName>NtNAP1;3</shortName>
    </recommendedName>
    <alternativeName>
        <fullName>Nucleosome assembly protein 1-like 3</fullName>
        <shortName>NtNAP1_L3</shortName>
    </alternativeName>
</protein>
<accession>Q70Z17</accession>
<feature type="chain" id="PRO_0000423699" description="Nucleosome assembly protein 1;3">
    <location>
        <begin position="1"/>
        <end position="374"/>
    </location>
</feature>
<feature type="propeptide" id="PRO_0000423700" description="Removed in mature form" evidence="2">
    <location>
        <begin position="375"/>
        <end position="377"/>
    </location>
</feature>
<feature type="region of interest" description="Disordered" evidence="4">
    <location>
        <begin position="298"/>
        <end position="377"/>
    </location>
</feature>
<feature type="coiled-coil region" evidence="3">
    <location>
        <begin position="26"/>
        <end position="80"/>
    </location>
</feature>
<feature type="short sequence motif" description="Nuclear export signal" evidence="3">
    <location>
        <begin position="47"/>
        <end position="62"/>
    </location>
</feature>
<feature type="short sequence motif" description="Nuclear localization signal" evidence="3">
    <location>
        <begin position="223"/>
        <end position="228"/>
    </location>
</feature>
<feature type="compositionally biased region" description="Acidic residues" evidence="4">
    <location>
        <begin position="300"/>
        <end position="341"/>
    </location>
</feature>
<feature type="compositionally biased region" description="Basic residues" evidence="4">
    <location>
        <begin position="345"/>
        <end position="357"/>
    </location>
</feature>
<feature type="modified residue" description="Cysteine methyl ester" evidence="2">
    <location>
        <position position="374"/>
    </location>
</feature>
<feature type="lipid moiety-binding region" description="S-farnesyl cysteine" evidence="2">
    <location>
        <position position="374"/>
    </location>
</feature>
<keyword id="KW-0143">Chaperone</keyword>
<keyword id="KW-0175">Coiled coil</keyword>
<keyword id="KW-0963">Cytoplasm</keyword>
<keyword id="KW-0449">Lipoprotein</keyword>
<keyword id="KW-0488">Methylation</keyword>
<keyword id="KW-0539">Nucleus</keyword>
<keyword id="KW-0636">Prenylation</keyword>
<keyword id="KW-1185">Reference proteome</keyword>
<reference key="1">
    <citation type="journal article" date="2003" name="Planta">
        <title>Regulation of biosynthesis and intracellular localization of rice and tobacco homologues of nucleosome assembly protein 1.</title>
        <authorList>
            <person name="Dong A."/>
            <person name="Zhu Y."/>
            <person name="Yu Y."/>
            <person name="Cao K."/>
            <person name="Sun C."/>
            <person name="Shen W.H."/>
        </authorList>
    </citation>
    <scope>NUCLEOTIDE SEQUENCE [MRNA]</scope>
    <scope>FUNCTION</scope>
    <scope>SUBCELLULAR LOCATION</scope>
    <source>
        <strain>cv. Bright Yellow 2</strain>
    </source>
</reference>
<reference key="2">
    <citation type="journal article" date="2005" name="Plant Physiol.">
        <title>Interacting proteins and differences in nuclear transport reveal specific functions for the NAP1 family proteins in plants.</title>
        <authorList>
            <person name="Dong A."/>
            <person name="Liu Z."/>
            <person name="Zhu Y."/>
            <person name="Yu F."/>
            <person name="Li Z."/>
            <person name="Cao K."/>
            <person name="Shen W.H."/>
        </authorList>
    </citation>
    <scope>FUNCTION</scope>
    <scope>SUBUNIT</scope>
    <scope>INTERACTION WITH NAP1;4 AND CYCB1;1</scope>
    <scope>SUBCELLULAR LOCATION</scope>
</reference>
<comment type="function">
    <text evidence="1 5 6">May modulate chromatin structure by regulation of nucleosome assembly/disassembly (By similarity). Could function together with B-type cyclins in the regulation of microtubule dynamics.</text>
</comment>
<comment type="subunit">
    <text evidence="6">Can form homomeric and heteromeric protein complexes with NAP1;4. Binds histones H2A and H2B in vivo. Also able to bind histones H1 and H4 in vitro. Interacts with CYCB1;1 and with alpha tubulin.</text>
</comment>
<comment type="subcellular location">
    <subcellularLocation>
        <location evidence="1">Nucleus</location>
    </subcellularLocation>
    <subcellularLocation>
        <location evidence="5 6">Cytoplasm</location>
    </subcellularLocation>
</comment>
<comment type="domain">
    <text>The acidic domain is probably involved in the interaction with histones.</text>
</comment>
<comment type="similarity">
    <text evidence="7">Belongs to the nucleosome assembly protein (NAP) family.</text>
</comment>
<gene>
    <name type="primary">NAP1;3</name>
    <name type="synonym">NAP1_L3</name>
</gene>
<name>NAP1C_TOBAC</name>
<evidence type="ECO:0000250" key="1"/>
<evidence type="ECO:0000250" key="2">
    <source>
        <dbReference type="UniProtKB" id="Q9SZI2"/>
    </source>
</evidence>
<evidence type="ECO:0000255" key="3"/>
<evidence type="ECO:0000256" key="4">
    <source>
        <dbReference type="SAM" id="MobiDB-lite"/>
    </source>
</evidence>
<evidence type="ECO:0000269" key="5">
    <source>
    </source>
</evidence>
<evidence type="ECO:0000269" key="6">
    <source>
    </source>
</evidence>
<evidence type="ECO:0000305" key="7"/>
<dbReference type="EMBL" id="AJ438615">
    <property type="protein sequence ID" value="CAD27462.1"/>
    <property type="molecule type" value="mRNA"/>
</dbReference>
<dbReference type="RefSeq" id="NP_001312957.1">
    <property type="nucleotide sequence ID" value="NM_001326028.1"/>
</dbReference>
<dbReference type="SMR" id="Q70Z17"/>
<dbReference type="STRING" id="4097.Q70Z17"/>
<dbReference type="PaxDb" id="4097-Q70Z17"/>
<dbReference type="GeneID" id="107818745"/>
<dbReference type="KEGG" id="nta:107818745"/>
<dbReference type="OMA" id="AAECKQN"/>
<dbReference type="OrthoDB" id="27325at2759"/>
<dbReference type="Proteomes" id="UP000084051">
    <property type="component" value="Unplaced"/>
</dbReference>
<dbReference type="GO" id="GO:0000785">
    <property type="term" value="C:chromatin"/>
    <property type="evidence" value="ECO:0000318"/>
    <property type="project" value="GO_Central"/>
</dbReference>
<dbReference type="GO" id="GO:0005737">
    <property type="term" value="C:cytoplasm"/>
    <property type="evidence" value="ECO:0007669"/>
    <property type="project" value="UniProtKB-SubCell"/>
</dbReference>
<dbReference type="GO" id="GO:0005634">
    <property type="term" value="C:nucleus"/>
    <property type="evidence" value="ECO:0000318"/>
    <property type="project" value="GO_Central"/>
</dbReference>
<dbReference type="GO" id="GO:0003682">
    <property type="term" value="F:chromatin binding"/>
    <property type="evidence" value="ECO:0000318"/>
    <property type="project" value="GO_Central"/>
</dbReference>
<dbReference type="GO" id="GO:0042393">
    <property type="term" value="F:histone binding"/>
    <property type="evidence" value="ECO:0000318"/>
    <property type="project" value="GO_Central"/>
</dbReference>
<dbReference type="GO" id="GO:0000724">
    <property type="term" value="P:double-strand break repair via homologous recombination"/>
    <property type="evidence" value="ECO:0007669"/>
    <property type="project" value="UniProtKB-ARBA"/>
</dbReference>
<dbReference type="GO" id="GO:0006334">
    <property type="term" value="P:nucleosome assembly"/>
    <property type="evidence" value="ECO:0000318"/>
    <property type="project" value="GO_Central"/>
</dbReference>
<dbReference type="FunFam" id="1.20.5.1500:FF:000001">
    <property type="entry name" value="Nucleosome assembly protein 1-like 1"/>
    <property type="match status" value="1"/>
</dbReference>
<dbReference type="FunFam" id="3.30.1120.90:FF:000005">
    <property type="entry name" value="Nucleosome assembly protein11"/>
    <property type="match status" value="1"/>
</dbReference>
<dbReference type="Gene3D" id="1.20.5.1500">
    <property type="match status" value="1"/>
</dbReference>
<dbReference type="Gene3D" id="3.30.1120.90">
    <property type="entry name" value="Nucleosome assembly protein"/>
    <property type="match status" value="1"/>
</dbReference>
<dbReference type="InterPro" id="IPR037231">
    <property type="entry name" value="NAP-like_sf"/>
</dbReference>
<dbReference type="InterPro" id="IPR002164">
    <property type="entry name" value="NAP_family"/>
</dbReference>
<dbReference type="PANTHER" id="PTHR11875">
    <property type="entry name" value="TESTIS-SPECIFIC Y-ENCODED PROTEIN"/>
    <property type="match status" value="1"/>
</dbReference>
<dbReference type="Pfam" id="PF00956">
    <property type="entry name" value="NAP"/>
    <property type="match status" value="1"/>
</dbReference>
<dbReference type="SUPFAM" id="SSF143113">
    <property type="entry name" value="NAP-like"/>
    <property type="match status" value="1"/>
</dbReference>
<sequence>MSNAKDNFNVADLTAALNAEDRDDLVNVLKNKLQGLTGKHSNVLENLSPNVRKRVEVLREIQTQHDELEAKFFEERAALEAKYQKQYQPLYAKRSEIVNGVVEVDGEATQTAAADEEEDKDSVEKGVPDFWVTAMKNNEVLAEEITERDEGALKFLKDIKWSRIENPKGFKLEFFFETNPYFTNTVLTKTYHMIDEDEPILEKAIGTEIEWHPGKCLTQKILKKKPKKGSKNSKPITKIEQCESFFNFFSPPQVPDDEEDIDEDAAEELQNLMEQDYDIGSTIRDKIIPHAVSWFTGEAAQDEDYIDLEDDEDEEDDEDEDEDEEDEEEEDEDEDDDDEDEHVTKTKKKSSAGRKRSGGAPAADGQPGERPPECKQQ</sequence>
<organism>
    <name type="scientific">Nicotiana tabacum</name>
    <name type="common">Common tobacco</name>
    <dbReference type="NCBI Taxonomy" id="4097"/>
    <lineage>
        <taxon>Eukaryota</taxon>
        <taxon>Viridiplantae</taxon>
        <taxon>Streptophyta</taxon>
        <taxon>Embryophyta</taxon>
        <taxon>Tracheophyta</taxon>
        <taxon>Spermatophyta</taxon>
        <taxon>Magnoliopsida</taxon>
        <taxon>eudicotyledons</taxon>
        <taxon>Gunneridae</taxon>
        <taxon>Pentapetalae</taxon>
        <taxon>asterids</taxon>
        <taxon>lamiids</taxon>
        <taxon>Solanales</taxon>
        <taxon>Solanaceae</taxon>
        <taxon>Nicotianoideae</taxon>
        <taxon>Nicotianeae</taxon>
        <taxon>Nicotiana</taxon>
    </lineage>
</organism>